<reference key="1">
    <citation type="journal article" date="2008" name="Genome Res.">
        <title>Insights from the complete genome sequence of Mycobacterium marinum on the evolution of Mycobacterium tuberculosis.</title>
        <authorList>
            <person name="Stinear T.P."/>
            <person name="Seemann T."/>
            <person name="Harrison P.F."/>
            <person name="Jenkin G.A."/>
            <person name="Davies J.K."/>
            <person name="Johnson P.D."/>
            <person name="Abdellah Z."/>
            <person name="Arrowsmith C."/>
            <person name="Chillingworth T."/>
            <person name="Churcher C."/>
            <person name="Clarke K."/>
            <person name="Cronin A."/>
            <person name="Davis P."/>
            <person name="Goodhead I."/>
            <person name="Holroyd N."/>
            <person name="Jagels K."/>
            <person name="Lord A."/>
            <person name="Moule S."/>
            <person name="Mungall K."/>
            <person name="Norbertczak H."/>
            <person name="Quail M.A."/>
            <person name="Rabbinowitsch E."/>
            <person name="Walker D."/>
            <person name="White B."/>
            <person name="Whitehead S."/>
            <person name="Small P.L."/>
            <person name="Brosch R."/>
            <person name="Ramakrishnan L."/>
            <person name="Fischbach M.A."/>
            <person name="Parkhill J."/>
            <person name="Cole S.T."/>
        </authorList>
    </citation>
    <scope>NUCLEOTIDE SEQUENCE [LARGE SCALE GENOMIC DNA]</scope>
    <source>
        <strain>ATCC BAA-535 / M</strain>
    </source>
</reference>
<organism>
    <name type="scientific">Mycobacterium marinum (strain ATCC BAA-535 / M)</name>
    <dbReference type="NCBI Taxonomy" id="216594"/>
    <lineage>
        <taxon>Bacteria</taxon>
        <taxon>Bacillati</taxon>
        <taxon>Actinomycetota</taxon>
        <taxon>Actinomycetes</taxon>
        <taxon>Mycobacteriales</taxon>
        <taxon>Mycobacteriaceae</taxon>
        <taxon>Mycobacterium</taxon>
        <taxon>Mycobacterium ulcerans group</taxon>
    </lineage>
</organism>
<keyword id="KW-0030">Aminoacyl-tRNA synthetase</keyword>
<keyword id="KW-0067">ATP-binding</keyword>
<keyword id="KW-0963">Cytoplasm</keyword>
<keyword id="KW-0436">Ligase</keyword>
<keyword id="KW-0479">Metal-binding</keyword>
<keyword id="KW-0547">Nucleotide-binding</keyword>
<keyword id="KW-0648">Protein biosynthesis</keyword>
<keyword id="KW-1185">Reference proteome</keyword>
<keyword id="KW-0694">RNA-binding</keyword>
<keyword id="KW-0820">tRNA-binding</keyword>
<keyword id="KW-0862">Zinc</keyword>
<evidence type="ECO:0000255" key="1">
    <source>
        <dbReference type="HAMAP-Rule" id="MF_00184"/>
    </source>
</evidence>
<evidence type="ECO:0000255" key="2">
    <source>
        <dbReference type="PROSITE-ProRule" id="PRU01228"/>
    </source>
</evidence>
<evidence type="ECO:0000256" key="3">
    <source>
        <dbReference type="SAM" id="MobiDB-lite"/>
    </source>
</evidence>
<name>SYT_MYCMM</name>
<protein>
    <recommendedName>
        <fullName evidence="1">Threonine--tRNA ligase</fullName>
        <ecNumber evidence="1">6.1.1.3</ecNumber>
    </recommendedName>
    <alternativeName>
        <fullName evidence="1">Threonyl-tRNA synthetase</fullName>
        <shortName evidence="1">ThrRS</shortName>
    </alternativeName>
</protein>
<gene>
    <name evidence="1" type="primary">thrS</name>
    <name type="ordered locus">MMAR_2088</name>
</gene>
<proteinExistence type="inferred from homology"/>
<sequence>MSVPAQPAPGADGGDPRQPIRVPAGTTAAAAIGEAGLPRRGAPDAIVVVRDAEGKLRDLSWVPDADAEVTPIAANTDDGRSVIRHSTAHVLAQAVQDLFPQAKLGIGPPITDGFYYDFEVLEPFTPDDLQALEKRMRQIVKEGQLFDRRVFESKDQAREELANEPYKLELVDDKSGDPDVMEVGGDELTAYDNLNPRTRERVWGDLCRGPHIPTTKHIPAFKLTRSSAAYWRGDQKNASLQRIYGTAWESQEALDKHIELIEEAQRRDHRKLGVELDLFSFPDEIGSGLAVFHPKGGIVRRELEDYSRRKHTEAGYQFVNSPHITKAQLFHTSGHLDWYADGMFPPMQIDAEYNADGTVRKPGQDYYLKPMNCPMHCLIFRARGRSYRELPLRLFEFGTVYRYEKSGVVHGLTRVRGLTMDDAHIFCTREQMRDELRSLLRFVLDLLSDYGLTDFYLELSTKDPDKFVGSDEVWEEATNVLAEVGAESGLELVPDPGGAAFYGPKISVQVKDALGRTWQMSTIQLDFNFPERFGLEYTAADGTRQRPVMIHRALFGSIERFFGILTEHYAGAFPAWLAPVQAVGIPVADEHVAYLEQVAAQLKSHGVRVEVDTSDDRMAKKIVHHTNQKVPFMLLAGDRDVQADAVSFRFGDRTQINGVPREAAVAAIVDWISRRENATPTAELVKVDSGE</sequence>
<feature type="chain" id="PRO_1000098587" description="Threonine--tRNA ligase">
    <location>
        <begin position="1"/>
        <end position="691"/>
    </location>
</feature>
<feature type="domain" description="TGS" evidence="2">
    <location>
        <begin position="1"/>
        <end position="73"/>
    </location>
</feature>
<feature type="region of interest" description="Disordered" evidence="3">
    <location>
        <begin position="1"/>
        <end position="22"/>
    </location>
</feature>
<feature type="region of interest" description="Catalytic" evidence="1">
    <location>
        <begin position="268"/>
        <end position="574"/>
    </location>
</feature>
<feature type="binding site" evidence="1">
    <location>
        <position position="373"/>
    </location>
    <ligand>
        <name>Zn(2+)</name>
        <dbReference type="ChEBI" id="CHEBI:29105"/>
    </ligand>
</feature>
<feature type="binding site" evidence="1">
    <location>
        <position position="424"/>
    </location>
    <ligand>
        <name>Zn(2+)</name>
        <dbReference type="ChEBI" id="CHEBI:29105"/>
    </ligand>
</feature>
<feature type="binding site" evidence="1">
    <location>
        <position position="551"/>
    </location>
    <ligand>
        <name>Zn(2+)</name>
        <dbReference type="ChEBI" id="CHEBI:29105"/>
    </ligand>
</feature>
<comment type="function">
    <text evidence="1">Catalyzes the attachment of threonine to tRNA(Thr) in a two-step reaction: L-threonine is first activated by ATP to form Thr-AMP and then transferred to the acceptor end of tRNA(Thr). Also edits incorrectly charged L-seryl-tRNA(Thr).</text>
</comment>
<comment type="catalytic activity">
    <reaction evidence="1">
        <text>tRNA(Thr) + L-threonine + ATP = L-threonyl-tRNA(Thr) + AMP + diphosphate + H(+)</text>
        <dbReference type="Rhea" id="RHEA:24624"/>
        <dbReference type="Rhea" id="RHEA-COMP:9670"/>
        <dbReference type="Rhea" id="RHEA-COMP:9704"/>
        <dbReference type="ChEBI" id="CHEBI:15378"/>
        <dbReference type="ChEBI" id="CHEBI:30616"/>
        <dbReference type="ChEBI" id="CHEBI:33019"/>
        <dbReference type="ChEBI" id="CHEBI:57926"/>
        <dbReference type="ChEBI" id="CHEBI:78442"/>
        <dbReference type="ChEBI" id="CHEBI:78534"/>
        <dbReference type="ChEBI" id="CHEBI:456215"/>
        <dbReference type="EC" id="6.1.1.3"/>
    </reaction>
</comment>
<comment type="cofactor">
    <cofactor evidence="1">
        <name>Zn(2+)</name>
        <dbReference type="ChEBI" id="CHEBI:29105"/>
    </cofactor>
    <text evidence="1">Binds 1 zinc ion per subunit.</text>
</comment>
<comment type="subunit">
    <text evidence="1">Homodimer.</text>
</comment>
<comment type="subcellular location">
    <subcellularLocation>
        <location evidence="1">Cytoplasm</location>
    </subcellularLocation>
</comment>
<comment type="similarity">
    <text evidence="1">Belongs to the class-II aminoacyl-tRNA synthetase family.</text>
</comment>
<dbReference type="EC" id="6.1.1.3" evidence="1"/>
<dbReference type="EMBL" id="CP000854">
    <property type="protein sequence ID" value="ACC40538.1"/>
    <property type="molecule type" value="Genomic_DNA"/>
</dbReference>
<dbReference type="RefSeq" id="WP_012393862.1">
    <property type="nucleotide sequence ID" value="NC_010612.1"/>
</dbReference>
<dbReference type="SMR" id="B2HM74"/>
<dbReference type="STRING" id="216594.MMAR_2088"/>
<dbReference type="KEGG" id="mmi:MMAR_2088"/>
<dbReference type="eggNOG" id="COG0441">
    <property type="taxonomic scope" value="Bacteria"/>
</dbReference>
<dbReference type="HOGENOM" id="CLU_008554_0_1_11"/>
<dbReference type="OrthoDB" id="9802304at2"/>
<dbReference type="Proteomes" id="UP000001190">
    <property type="component" value="Chromosome"/>
</dbReference>
<dbReference type="GO" id="GO:0005737">
    <property type="term" value="C:cytoplasm"/>
    <property type="evidence" value="ECO:0007669"/>
    <property type="project" value="UniProtKB-SubCell"/>
</dbReference>
<dbReference type="GO" id="GO:0005524">
    <property type="term" value="F:ATP binding"/>
    <property type="evidence" value="ECO:0007669"/>
    <property type="project" value="UniProtKB-UniRule"/>
</dbReference>
<dbReference type="GO" id="GO:0046872">
    <property type="term" value="F:metal ion binding"/>
    <property type="evidence" value="ECO:0007669"/>
    <property type="project" value="UniProtKB-KW"/>
</dbReference>
<dbReference type="GO" id="GO:0004829">
    <property type="term" value="F:threonine-tRNA ligase activity"/>
    <property type="evidence" value="ECO:0007669"/>
    <property type="project" value="UniProtKB-UniRule"/>
</dbReference>
<dbReference type="GO" id="GO:0000049">
    <property type="term" value="F:tRNA binding"/>
    <property type="evidence" value="ECO:0007669"/>
    <property type="project" value="UniProtKB-KW"/>
</dbReference>
<dbReference type="GO" id="GO:0006435">
    <property type="term" value="P:threonyl-tRNA aminoacylation"/>
    <property type="evidence" value="ECO:0007669"/>
    <property type="project" value="UniProtKB-UniRule"/>
</dbReference>
<dbReference type="CDD" id="cd00860">
    <property type="entry name" value="ThrRS_anticodon"/>
    <property type="match status" value="1"/>
</dbReference>
<dbReference type="CDD" id="cd00771">
    <property type="entry name" value="ThrRS_core"/>
    <property type="match status" value="1"/>
</dbReference>
<dbReference type="FunFam" id="3.30.54.20:FF:000003">
    <property type="entry name" value="Threonine--tRNA ligase"/>
    <property type="match status" value="1"/>
</dbReference>
<dbReference type="FunFam" id="3.30.930.10:FF:000019">
    <property type="entry name" value="Threonine--tRNA ligase"/>
    <property type="match status" value="1"/>
</dbReference>
<dbReference type="FunFam" id="3.40.50.800:FF:000001">
    <property type="entry name" value="Threonine--tRNA ligase"/>
    <property type="match status" value="1"/>
</dbReference>
<dbReference type="FunFam" id="3.30.980.10:FF:000005">
    <property type="entry name" value="Threonyl-tRNA synthetase, mitochondrial"/>
    <property type="match status" value="1"/>
</dbReference>
<dbReference type="Gene3D" id="3.30.54.20">
    <property type="match status" value="1"/>
</dbReference>
<dbReference type="Gene3D" id="3.40.50.800">
    <property type="entry name" value="Anticodon-binding domain"/>
    <property type="match status" value="1"/>
</dbReference>
<dbReference type="Gene3D" id="3.30.930.10">
    <property type="entry name" value="Bira Bifunctional Protein, Domain 2"/>
    <property type="match status" value="1"/>
</dbReference>
<dbReference type="Gene3D" id="3.30.980.10">
    <property type="entry name" value="Threonyl-trna Synthetase, Chain A, domain 2"/>
    <property type="match status" value="1"/>
</dbReference>
<dbReference type="HAMAP" id="MF_00184">
    <property type="entry name" value="Thr_tRNA_synth"/>
    <property type="match status" value="1"/>
</dbReference>
<dbReference type="InterPro" id="IPR002314">
    <property type="entry name" value="aa-tRNA-synt_IIb"/>
</dbReference>
<dbReference type="InterPro" id="IPR006195">
    <property type="entry name" value="aa-tRNA-synth_II"/>
</dbReference>
<dbReference type="InterPro" id="IPR045864">
    <property type="entry name" value="aa-tRNA-synth_II/BPL/LPL"/>
</dbReference>
<dbReference type="InterPro" id="IPR004154">
    <property type="entry name" value="Anticodon-bd"/>
</dbReference>
<dbReference type="InterPro" id="IPR036621">
    <property type="entry name" value="Anticodon-bd_dom_sf"/>
</dbReference>
<dbReference type="InterPro" id="IPR004095">
    <property type="entry name" value="TGS"/>
</dbReference>
<dbReference type="InterPro" id="IPR002320">
    <property type="entry name" value="Thr-tRNA-ligase_IIa"/>
</dbReference>
<dbReference type="InterPro" id="IPR018163">
    <property type="entry name" value="Thr/Ala-tRNA-synth_IIc_edit"/>
</dbReference>
<dbReference type="InterPro" id="IPR047246">
    <property type="entry name" value="ThrRS_anticodon"/>
</dbReference>
<dbReference type="InterPro" id="IPR033728">
    <property type="entry name" value="ThrRS_core"/>
</dbReference>
<dbReference type="InterPro" id="IPR012947">
    <property type="entry name" value="tRNA_SAD"/>
</dbReference>
<dbReference type="NCBIfam" id="TIGR00418">
    <property type="entry name" value="thrS"/>
    <property type="match status" value="1"/>
</dbReference>
<dbReference type="PANTHER" id="PTHR11451:SF44">
    <property type="entry name" value="THREONINE--TRNA LIGASE, CHLOROPLASTIC_MITOCHONDRIAL 2"/>
    <property type="match status" value="1"/>
</dbReference>
<dbReference type="PANTHER" id="PTHR11451">
    <property type="entry name" value="THREONINE-TRNA LIGASE"/>
    <property type="match status" value="1"/>
</dbReference>
<dbReference type="Pfam" id="PF03129">
    <property type="entry name" value="HGTP_anticodon"/>
    <property type="match status" value="1"/>
</dbReference>
<dbReference type="Pfam" id="PF00587">
    <property type="entry name" value="tRNA-synt_2b"/>
    <property type="match status" value="1"/>
</dbReference>
<dbReference type="Pfam" id="PF07973">
    <property type="entry name" value="tRNA_SAD"/>
    <property type="match status" value="1"/>
</dbReference>
<dbReference type="PRINTS" id="PR01047">
    <property type="entry name" value="TRNASYNTHTHR"/>
</dbReference>
<dbReference type="SMART" id="SM00863">
    <property type="entry name" value="tRNA_SAD"/>
    <property type="match status" value="1"/>
</dbReference>
<dbReference type="SUPFAM" id="SSF52954">
    <property type="entry name" value="Class II aaRS ABD-related"/>
    <property type="match status" value="1"/>
</dbReference>
<dbReference type="SUPFAM" id="SSF55681">
    <property type="entry name" value="Class II aaRS and biotin synthetases"/>
    <property type="match status" value="1"/>
</dbReference>
<dbReference type="SUPFAM" id="SSF55186">
    <property type="entry name" value="ThrRS/AlaRS common domain"/>
    <property type="match status" value="1"/>
</dbReference>
<dbReference type="PROSITE" id="PS50862">
    <property type="entry name" value="AA_TRNA_LIGASE_II"/>
    <property type="match status" value="1"/>
</dbReference>
<dbReference type="PROSITE" id="PS51880">
    <property type="entry name" value="TGS"/>
    <property type="match status" value="1"/>
</dbReference>
<accession>B2HM74</accession>